<keyword id="KW-0121">Carboxypeptidase</keyword>
<keyword id="KW-0963">Cytoplasm</keyword>
<keyword id="KW-0206">Cytoskeleton</keyword>
<keyword id="KW-0378">Hydrolase</keyword>
<keyword id="KW-0479">Metal-binding</keyword>
<keyword id="KW-0482">Metalloprotease</keyword>
<keyword id="KW-0539">Nucleus</keyword>
<keyword id="KW-0645">Protease</keyword>
<keyword id="KW-1185">Reference proteome</keyword>
<keyword id="KW-0862">Zinc</keyword>
<evidence type="ECO:0000250" key="1">
    <source>
        <dbReference type="UniProtKB" id="P00730"/>
    </source>
</evidence>
<evidence type="ECO:0000250" key="2">
    <source>
        <dbReference type="UniProtKB" id="Q09M02"/>
    </source>
</evidence>
<evidence type="ECO:0000250" key="3">
    <source>
        <dbReference type="UniProtKB" id="Q8NDL9"/>
    </source>
</evidence>
<evidence type="ECO:0000255" key="4">
    <source>
        <dbReference type="PROSITE-ProRule" id="PRU01379"/>
    </source>
</evidence>
<evidence type="ECO:0000256" key="5">
    <source>
        <dbReference type="SAM" id="MobiDB-lite"/>
    </source>
</evidence>
<evidence type="ECO:0000305" key="6"/>
<gene>
    <name type="primary">Agbl5</name>
    <name evidence="2" type="synonym">Ccp5</name>
</gene>
<proteinExistence type="evidence at transcript level"/>
<organism>
    <name type="scientific">Rattus norvegicus</name>
    <name type="common">Rat</name>
    <dbReference type="NCBI Taxonomy" id="10116"/>
    <lineage>
        <taxon>Eukaryota</taxon>
        <taxon>Metazoa</taxon>
        <taxon>Chordata</taxon>
        <taxon>Craniata</taxon>
        <taxon>Vertebrata</taxon>
        <taxon>Euteleostomi</taxon>
        <taxon>Mammalia</taxon>
        <taxon>Eutheria</taxon>
        <taxon>Euarchontoglires</taxon>
        <taxon>Glires</taxon>
        <taxon>Rodentia</taxon>
        <taxon>Myomorpha</taxon>
        <taxon>Muroidea</taxon>
        <taxon>Muridae</taxon>
        <taxon>Murinae</taxon>
        <taxon>Rattus</taxon>
    </lineage>
</organism>
<protein>
    <recommendedName>
        <fullName evidence="2">Cytosolic carboxypeptidase-like protein 5</fullName>
        <ecNumber evidence="2">3.4.17.-</ecNumber>
        <ecNumber evidence="2">3.4.17.24</ecNumber>
    </recommendedName>
    <alternativeName>
        <fullName>ATP/GTP-binding protein-like 5</fullName>
    </alternativeName>
    <alternativeName>
        <fullName evidence="6">Protein deglutamylase CCP5</fullName>
    </alternativeName>
</protein>
<name>CBPC5_RAT</name>
<reference key="1">
    <citation type="journal article" date="2004" name="Genome Res.">
        <title>The status, quality, and expansion of the NIH full-length cDNA project: the Mammalian Gene Collection (MGC).</title>
        <authorList>
            <consortium name="The MGC Project Team"/>
        </authorList>
    </citation>
    <scope>NUCLEOTIDE SEQUENCE [LARGE SCALE MRNA]</scope>
    <source>
        <tissue>Kidney</tissue>
    </source>
</reference>
<sequence length="832" mass="92554">MELRCGGLLFSSRFDSGNLAHVEKVETVPSDGEGVGGAATAPTSGSASSPDYEFNVWTRPDCAETEYENGNRSWFYFSVRGGTPGKLIKINIMNMNKQSKLYSQGMAPFVRTLPSRPRWERIRERPTFEMTETQFVLSFVHRFVEGRGATTFFAFCYPFSYSDCQDLLSQLDQRFPENYSAHSSPLDSIYYHRELLCYSLDGLRVDLLTITSCHGLRDDREPRLEQLFPDVGTPRPFRFTGKRIFFLSSRVHPGETPSSFVFNGFLDFILRPDDPRAQTLRRLFVFKLIPMLNPDGVVRGHYRTDSRGVNLNRQYLKPDAVLHPAIYGAKAVLLYHHVHSRLNSKNPSNQQPSSLHLPPEVPLSDLEKANNLHNELHLGQSPDGENHDRWTETEPTEEKTDPVWIMPQPIPELEEPAPDAIPPKESGVAYYVDLHGHASKRGCFMYGNSFSDESTQVENMLYPKLISLNSAHFDFQGCNFSEKNMYARDRRDGQSKEGSGRVAIYKASGIIHSYTLECNYNTGRSVNSIPAACHDNGRASPPPPPTFPSRYTVELFEQVGRALAIAALDMAECNPWPRIVLSEHSSLTNLRAWMLKHVRNSRGLTSTANVGLNKKRGSRTPPKSNNGLPVSCSENALSRARSFSTGTSTGGSSSQQNSPQMKNSPSFPFHGSRPAGLPGLGSSTQKVSHRVLGPVREPRCPDRRRRQQQQQQQQQQQQQQQQQPLNQRSTTSSLAPSPTLASASPTSSRNMGSCLLPNSLSLSGSSCPFSSSGDKPEAVMVIGKSLLGAGARIPCIRTRLQTCQRRVSARRGPGFPRLGPGWAGAHRRLAEG</sequence>
<comment type="function">
    <text evidence="2">Metallocarboxypeptidase that mediates deglutamylation of tubulin and non-tubulin target proteins. Catalyzes the removal of polyglutamate side chains present on the gamma-carboxyl group of glutamate residues within the C-terminal tail of alpha- and beta-tubulin. Cleaves alpha- and gamma-linked polyglutamate tubulin side-chain, as well as the branching point glutamate. Also catalyzes the removal of alpha-linked glutamate residues from the carboxy-terminus of alpha-tubulin. Mediates deglutamylation of nucleotidyltransferase CGAS, leading to CGAS antiviral defense response activation.</text>
</comment>
<comment type="catalytic activity">
    <reaction evidence="2">
        <text>gamma-L-glutamyl-L-glutamyl-[protein] + H2O = L-glutamyl-[protein] + L-glutamate</text>
        <dbReference type="Rhea" id="RHEA:60152"/>
        <dbReference type="Rhea" id="RHEA-COMP:10208"/>
        <dbReference type="Rhea" id="RHEA-COMP:15517"/>
        <dbReference type="ChEBI" id="CHEBI:15377"/>
        <dbReference type="ChEBI" id="CHEBI:29973"/>
        <dbReference type="ChEBI" id="CHEBI:29985"/>
        <dbReference type="ChEBI" id="CHEBI:143622"/>
    </reaction>
    <physiologicalReaction direction="left-to-right" evidence="2">
        <dbReference type="Rhea" id="RHEA:60153"/>
    </physiologicalReaction>
</comment>
<comment type="catalytic activity">
    <reaction evidence="2">
        <text>(L-glutamyl)(n+1)-gamma-L-glutamyl-L-glutamyl-[protein] + H2O = (L-glutamyl)(n)-gamma-L-glutamyl-L-glutamyl-[protein] + L-glutamate</text>
        <dbReference type="Rhea" id="RHEA:60004"/>
        <dbReference type="Rhea" id="RHEA-COMP:15519"/>
        <dbReference type="Rhea" id="RHEA-COMP:15675"/>
        <dbReference type="ChEBI" id="CHEBI:15377"/>
        <dbReference type="ChEBI" id="CHEBI:29985"/>
        <dbReference type="ChEBI" id="CHEBI:143623"/>
    </reaction>
    <physiologicalReaction direction="left-to-right" evidence="2">
        <dbReference type="Rhea" id="RHEA:60005"/>
    </physiologicalReaction>
</comment>
<comment type="catalytic activity">
    <reaction evidence="2">
        <text>C-terminal L-alpha-aminoacyl-L-glutamyl-[tubulin] + H2O = C-terminal L-alpha-aminoacyl-[tubulin] + L-glutamate</text>
        <dbReference type="Rhea" id="RHEA:63796"/>
        <dbReference type="Rhea" id="RHEA-COMP:16436"/>
        <dbReference type="Rhea" id="RHEA-COMP:16437"/>
        <dbReference type="ChEBI" id="CHEBI:15377"/>
        <dbReference type="ChEBI" id="CHEBI:29985"/>
        <dbReference type="ChEBI" id="CHEBI:90782"/>
        <dbReference type="ChEBI" id="CHEBI:149556"/>
        <dbReference type="EC" id="3.4.17.24"/>
    </reaction>
    <physiologicalReaction direction="left-to-right" evidence="2">
        <dbReference type="Rhea" id="RHEA:63797"/>
    </physiologicalReaction>
</comment>
<comment type="catalytic activity">
    <reaction evidence="2">
        <text>C-terminal L-alpha-aminoacyl-L-glutamyl-L-glutamyl-[tubulin] + H2O = C-terminal L-alpha-aminoacyl-L-glutamyl-[tubulin] + L-glutamate</text>
        <dbReference type="Rhea" id="RHEA:63792"/>
        <dbReference type="Rhea" id="RHEA-COMP:16435"/>
        <dbReference type="Rhea" id="RHEA-COMP:16436"/>
        <dbReference type="ChEBI" id="CHEBI:15377"/>
        <dbReference type="ChEBI" id="CHEBI:29985"/>
        <dbReference type="ChEBI" id="CHEBI:149555"/>
        <dbReference type="ChEBI" id="CHEBI:149556"/>
        <dbReference type="EC" id="3.4.17.24"/>
    </reaction>
    <physiologicalReaction direction="left-to-right" evidence="2">
        <dbReference type="Rhea" id="RHEA:63793"/>
    </physiologicalReaction>
</comment>
<comment type="cofactor">
    <cofactor evidence="1">
        <name>Zn(2+)</name>
        <dbReference type="ChEBI" id="CHEBI:29105"/>
    </cofactor>
    <text evidence="1">Binds 1 zinc ion per subunit.</text>
</comment>
<comment type="subcellular location">
    <subcellularLocation>
        <location evidence="2">Cytoplasm</location>
        <location evidence="2">Cytosol</location>
    </subcellularLocation>
    <subcellularLocation>
        <location evidence="2">Nucleus</location>
    </subcellularLocation>
    <subcellularLocation>
        <location evidence="3">Cytoplasm</location>
        <location evidence="3">Cytoskeleton</location>
        <location evidence="3">Spindle</location>
    </subcellularLocation>
    <subcellularLocation>
        <location evidence="3">Midbody</location>
    </subcellularLocation>
    <text evidence="2 3">Mainly cytoplasmic. Slight accumulation in the nucleus is observed. Colocalizes with alpha-tubulin in the mitotic spindle and with midbody microtubules in the intercellular bridges formed during cytokinesis.</text>
</comment>
<comment type="similarity">
    <text evidence="6">Belongs to the peptidase M14 family.</text>
</comment>
<dbReference type="EC" id="3.4.17.-" evidence="2"/>
<dbReference type="EC" id="3.4.17.24" evidence="2"/>
<dbReference type="EMBL" id="BC166490">
    <property type="protein sequence ID" value="AAI66490.1"/>
    <property type="molecule type" value="mRNA"/>
</dbReference>
<dbReference type="RefSeq" id="NP_001119844.1">
    <property type="nucleotide sequence ID" value="NM_001126372.1"/>
</dbReference>
<dbReference type="SMR" id="B2GV17"/>
<dbReference type="FunCoup" id="B2GV17">
    <property type="interactions" value="1376"/>
</dbReference>
<dbReference type="STRING" id="10116.ENSRNOP00000011635"/>
<dbReference type="MEROPS" id="M14.036"/>
<dbReference type="GlyGen" id="B2GV17">
    <property type="glycosylation" value="1 site"/>
</dbReference>
<dbReference type="PhosphoSitePlus" id="B2GV17"/>
<dbReference type="PaxDb" id="10116-ENSRNOP00000011635"/>
<dbReference type="GeneID" id="362710"/>
<dbReference type="KEGG" id="rno:362710"/>
<dbReference type="AGR" id="RGD:1598311"/>
<dbReference type="CTD" id="60509"/>
<dbReference type="RGD" id="1598311">
    <property type="gene designation" value="Agbl5"/>
</dbReference>
<dbReference type="VEuPathDB" id="HostDB:ENSRNOG00000008612"/>
<dbReference type="eggNOG" id="KOG3641">
    <property type="taxonomic scope" value="Eukaryota"/>
</dbReference>
<dbReference type="HOGENOM" id="CLU_007523_3_2_1"/>
<dbReference type="InParanoid" id="B2GV17"/>
<dbReference type="PRO" id="PR:B2GV17"/>
<dbReference type="Proteomes" id="UP000002494">
    <property type="component" value="Chromosome 6"/>
</dbReference>
<dbReference type="Bgee" id="ENSRNOG00000008612">
    <property type="expression patterns" value="Expressed in testis and 19 other cell types or tissues"/>
</dbReference>
<dbReference type="GO" id="GO:0005737">
    <property type="term" value="C:cytoplasm"/>
    <property type="evidence" value="ECO:0000318"/>
    <property type="project" value="GO_Central"/>
</dbReference>
<dbReference type="GO" id="GO:0005829">
    <property type="term" value="C:cytosol"/>
    <property type="evidence" value="ECO:0000250"/>
    <property type="project" value="UniProtKB"/>
</dbReference>
<dbReference type="GO" id="GO:0015630">
    <property type="term" value="C:microtubule cytoskeleton"/>
    <property type="evidence" value="ECO:0000318"/>
    <property type="project" value="GO_Central"/>
</dbReference>
<dbReference type="GO" id="GO:0030496">
    <property type="term" value="C:midbody"/>
    <property type="evidence" value="ECO:0000250"/>
    <property type="project" value="UniProtKB"/>
</dbReference>
<dbReference type="GO" id="GO:0072686">
    <property type="term" value="C:mitotic spindle"/>
    <property type="evidence" value="ECO:0000250"/>
    <property type="project" value="UniProtKB"/>
</dbReference>
<dbReference type="GO" id="GO:0005634">
    <property type="term" value="C:nucleus"/>
    <property type="evidence" value="ECO:0000250"/>
    <property type="project" value="UniProtKB"/>
</dbReference>
<dbReference type="GO" id="GO:0004181">
    <property type="term" value="F:metallocarboxypeptidase activity"/>
    <property type="evidence" value="ECO:0000250"/>
    <property type="project" value="UniProtKB"/>
</dbReference>
<dbReference type="GO" id="GO:0015631">
    <property type="term" value="F:tubulin binding"/>
    <property type="evidence" value="ECO:0000250"/>
    <property type="project" value="UniProtKB"/>
</dbReference>
<dbReference type="GO" id="GO:0008270">
    <property type="term" value="F:zinc ion binding"/>
    <property type="evidence" value="ECO:0007669"/>
    <property type="project" value="InterPro"/>
</dbReference>
<dbReference type="GO" id="GO:0035609">
    <property type="term" value="P:C-terminal protein deglutamylation"/>
    <property type="evidence" value="ECO:0000250"/>
    <property type="project" value="UniProtKB"/>
</dbReference>
<dbReference type="GO" id="GO:0051607">
    <property type="term" value="P:defense response to virus"/>
    <property type="evidence" value="ECO:0000250"/>
    <property type="project" value="UniProtKB"/>
</dbReference>
<dbReference type="GO" id="GO:0035611">
    <property type="term" value="P:protein branching point deglutamylation"/>
    <property type="evidence" value="ECO:0000250"/>
    <property type="project" value="UniProtKB"/>
</dbReference>
<dbReference type="GO" id="GO:0035608">
    <property type="term" value="P:protein deglutamylation"/>
    <property type="evidence" value="ECO:0000250"/>
    <property type="project" value="UniProtKB"/>
</dbReference>
<dbReference type="GO" id="GO:0035610">
    <property type="term" value="P:protein side chain deglutamylation"/>
    <property type="evidence" value="ECO:0000250"/>
    <property type="project" value="UniProtKB"/>
</dbReference>
<dbReference type="GO" id="GO:0006508">
    <property type="term" value="P:proteolysis"/>
    <property type="evidence" value="ECO:0007669"/>
    <property type="project" value="UniProtKB-KW"/>
</dbReference>
<dbReference type="CDD" id="cd06236">
    <property type="entry name" value="M14_AGBL5_like"/>
    <property type="match status" value="1"/>
</dbReference>
<dbReference type="FunFam" id="3.40.630.10:FF:000055">
    <property type="entry name" value="Cytosolic carboxypeptidase-like protein 5 isoform X1"/>
    <property type="match status" value="1"/>
</dbReference>
<dbReference type="FunFam" id="3.40.630.10:FF:000049">
    <property type="entry name" value="cytosolic carboxypeptidase-like protein 5 isoform X1"/>
    <property type="match status" value="1"/>
</dbReference>
<dbReference type="FunFam" id="2.60.40.3120:FF:000002">
    <property type="entry name" value="cytosolic carboxypeptidase-like protein 5 isoform X2"/>
    <property type="match status" value="1"/>
</dbReference>
<dbReference type="Gene3D" id="2.60.40.3120">
    <property type="match status" value="1"/>
</dbReference>
<dbReference type="Gene3D" id="3.40.630.10">
    <property type="entry name" value="Zn peptidases"/>
    <property type="match status" value="2"/>
</dbReference>
<dbReference type="InterPro" id="IPR050821">
    <property type="entry name" value="Cytosolic_carboxypeptidase"/>
</dbReference>
<dbReference type="InterPro" id="IPR034286">
    <property type="entry name" value="M14_AGBL5-like"/>
</dbReference>
<dbReference type="InterPro" id="IPR040626">
    <property type="entry name" value="Pepdidase_M14_N"/>
</dbReference>
<dbReference type="InterPro" id="IPR000834">
    <property type="entry name" value="Peptidase_M14"/>
</dbReference>
<dbReference type="PANTHER" id="PTHR12756">
    <property type="entry name" value="CYTOSOLIC CARBOXYPEPTIDASE"/>
    <property type="match status" value="1"/>
</dbReference>
<dbReference type="PANTHER" id="PTHR12756:SF12">
    <property type="entry name" value="CYTOSOLIC CARBOXYPEPTIDASE-LIKE PROTEIN 5"/>
    <property type="match status" value="1"/>
</dbReference>
<dbReference type="Pfam" id="PF18027">
    <property type="entry name" value="Pepdidase_M14_N"/>
    <property type="match status" value="1"/>
</dbReference>
<dbReference type="Pfam" id="PF00246">
    <property type="entry name" value="Peptidase_M14"/>
    <property type="match status" value="1"/>
</dbReference>
<dbReference type="SUPFAM" id="SSF53187">
    <property type="entry name" value="Zn-dependent exopeptidases"/>
    <property type="match status" value="1"/>
</dbReference>
<dbReference type="PROSITE" id="PS52035">
    <property type="entry name" value="PEPTIDASE_M14"/>
    <property type="match status" value="1"/>
</dbReference>
<feature type="chain" id="PRO_0000403762" description="Cytosolic carboxypeptidase-like protein 5">
    <location>
        <begin position="1"/>
        <end position="832"/>
    </location>
</feature>
<feature type="domain" description="Peptidase M14" evidence="4">
    <location>
        <begin position="157"/>
        <end position="571"/>
    </location>
</feature>
<feature type="region of interest" description="Disordered" evidence="5">
    <location>
        <begin position="27"/>
        <end position="50"/>
    </location>
</feature>
<feature type="region of interest" description="Disordered" evidence="5">
    <location>
        <begin position="343"/>
        <end position="362"/>
    </location>
</feature>
<feature type="region of interest" description="Disordered" evidence="5">
    <location>
        <begin position="376"/>
        <end position="402"/>
    </location>
</feature>
<feature type="region of interest" description="Disordered" evidence="5">
    <location>
        <begin position="606"/>
        <end position="752"/>
    </location>
</feature>
<feature type="compositionally biased region" description="Low complexity" evidence="5">
    <location>
        <begin position="38"/>
        <end position="50"/>
    </location>
</feature>
<feature type="compositionally biased region" description="Low complexity" evidence="5">
    <location>
        <begin position="343"/>
        <end position="354"/>
    </location>
</feature>
<feature type="compositionally biased region" description="Basic and acidic residues" evidence="5">
    <location>
        <begin position="384"/>
        <end position="401"/>
    </location>
</feature>
<feature type="compositionally biased region" description="Polar residues" evidence="5">
    <location>
        <begin position="621"/>
        <end position="636"/>
    </location>
</feature>
<feature type="compositionally biased region" description="Low complexity" evidence="5">
    <location>
        <begin position="644"/>
        <end position="654"/>
    </location>
</feature>
<feature type="compositionally biased region" description="Polar residues" evidence="5">
    <location>
        <begin position="655"/>
        <end position="666"/>
    </location>
</feature>
<feature type="compositionally biased region" description="Low complexity" evidence="5">
    <location>
        <begin position="708"/>
        <end position="752"/>
    </location>
</feature>
<feature type="active site" description="Proton donor/acceptor" evidence="4">
    <location>
        <position position="517"/>
    </location>
</feature>
<feature type="binding site" evidence="4">
    <location>
        <position position="252"/>
    </location>
    <ligand>
        <name>Zn(2+)</name>
        <dbReference type="ChEBI" id="CHEBI:29105"/>
        <note>catalytic</note>
    </ligand>
</feature>
<feature type="binding site" evidence="4">
    <location>
        <position position="255"/>
    </location>
    <ligand>
        <name>Zn(2+)</name>
        <dbReference type="ChEBI" id="CHEBI:29105"/>
        <note>catalytic</note>
    </ligand>
</feature>
<feature type="binding site" evidence="4">
    <location>
        <position position="435"/>
    </location>
    <ligand>
        <name>Zn(2+)</name>
        <dbReference type="ChEBI" id="CHEBI:29105"/>
        <note>catalytic</note>
    </ligand>
</feature>
<accession>B2GV17</accession>